<proteinExistence type="inferred from homology"/>
<feature type="chain" id="PRO_0000289752" description="sn-glycerol-3-phosphate import ATP-binding protein UgpC">
    <location>
        <begin position="1"/>
        <end position="356"/>
    </location>
</feature>
<feature type="domain" description="ABC transporter" evidence="1">
    <location>
        <begin position="4"/>
        <end position="235"/>
    </location>
</feature>
<feature type="binding site" evidence="1">
    <location>
        <begin position="37"/>
        <end position="44"/>
    </location>
    <ligand>
        <name>ATP</name>
        <dbReference type="ChEBI" id="CHEBI:30616"/>
    </ligand>
</feature>
<name>UGPC_ECOK1</name>
<dbReference type="EC" id="7.6.2.10" evidence="1"/>
<dbReference type="EMBL" id="CP000468">
    <property type="protein sequence ID" value="ABJ02921.1"/>
    <property type="molecule type" value="Genomic_DNA"/>
</dbReference>
<dbReference type="RefSeq" id="WP_000907827.1">
    <property type="nucleotide sequence ID" value="NZ_CADILS010000078.1"/>
</dbReference>
<dbReference type="SMR" id="A1AGY1"/>
<dbReference type="KEGG" id="ecv:APECO1_3009"/>
<dbReference type="HOGENOM" id="CLU_000604_1_1_6"/>
<dbReference type="Proteomes" id="UP000008216">
    <property type="component" value="Chromosome"/>
</dbReference>
<dbReference type="GO" id="GO:0055052">
    <property type="term" value="C:ATP-binding cassette (ABC) transporter complex, substrate-binding subunit-containing"/>
    <property type="evidence" value="ECO:0007669"/>
    <property type="project" value="TreeGrafter"/>
</dbReference>
<dbReference type="GO" id="GO:0015430">
    <property type="term" value="F:ABC-type glycerol-3-phosphate transporter activity"/>
    <property type="evidence" value="ECO:0007669"/>
    <property type="project" value="UniProtKB-EC"/>
</dbReference>
<dbReference type="GO" id="GO:0005524">
    <property type="term" value="F:ATP binding"/>
    <property type="evidence" value="ECO:0007669"/>
    <property type="project" value="UniProtKB-KW"/>
</dbReference>
<dbReference type="GO" id="GO:0016887">
    <property type="term" value="F:ATP hydrolysis activity"/>
    <property type="evidence" value="ECO:0007669"/>
    <property type="project" value="InterPro"/>
</dbReference>
<dbReference type="GO" id="GO:0008643">
    <property type="term" value="P:carbohydrate transport"/>
    <property type="evidence" value="ECO:0007669"/>
    <property type="project" value="InterPro"/>
</dbReference>
<dbReference type="GO" id="GO:0001407">
    <property type="term" value="P:glycerophosphodiester transmembrane transport"/>
    <property type="evidence" value="ECO:0007669"/>
    <property type="project" value="TreeGrafter"/>
</dbReference>
<dbReference type="CDD" id="cd03301">
    <property type="entry name" value="ABC_MalK_N"/>
    <property type="match status" value="1"/>
</dbReference>
<dbReference type="FunFam" id="3.40.50.300:FF:000042">
    <property type="entry name" value="Maltose/maltodextrin ABC transporter, ATP-binding protein"/>
    <property type="match status" value="1"/>
</dbReference>
<dbReference type="FunFam" id="2.40.50.100:FF:000032">
    <property type="entry name" value="sn-glycerol-3-phosphate import ATP-binding protein UgpC"/>
    <property type="match status" value="1"/>
</dbReference>
<dbReference type="FunFam" id="2.40.50.140:FF:000142">
    <property type="entry name" value="sn-glycerol-3-phosphate import ATP-binding protein UgpC"/>
    <property type="match status" value="1"/>
</dbReference>
<dbReference type="Gene3D" id="2.40.50.100">
    <property type="match status" value="1"/>
</dbReference>
<dbReference type="Gene3D" id="2.40.50.140">
    <property type="entry name" value="Nucleic acid-binding proteins"/>
    <property type="match status" value="1"/>
</dbReference>
<dbReference type="Gene3D" id="3.40.50.300">
    <property type="entry name" value="P-loop containing nucleotide triphosphate hydrolases"/>
    <property type="match status" value="1"/>
</dbReference>
<dbReference type="InterPro" id="IPR003593">
    <property type="entry name" value="AAA+_ATPase"/>
</dbReference>
<dbReference type="InterPro" id="IPR003439">
    <property type="entry name" value="ABC_transporter-like_ATP-bd"/>
</dbReference>
<dbReference type="InterPro" id="IPR017871">
    <property type="entry name" value="ABC_transporter-like_CS"/>
</dbReference>
<dbReference type="InterPro" id="IPR015855">
    <property type="entry name" value="ABC_transpr_MalK-like"/>
</dbReference>
<dbReference type="InterPro" id="IPR047641">
    <property type="entry name" value="ABC_transpr_MalK/UgpC-like"/>
</dbReference>
<dbReference type="InterPro" id="IPR008995">
    <property type="entry name" value="Mo/tungstate-bd_C_term_dom"/>
</dbReference>
<dbReference type="InterPro" id="IPR012340">
    <property type="entry name" value="NA-bd_OB-fold"/>
</dbReference>
<dbReference type="InterPro" id="IPR040582">
    <property type="entry name" value="OB_MalK-like"/>
</dbReference>
<dbReference type="InterPro" id="IPR027417">
    <property type="entry name" value="P-loop_NTPase"/>
</dbReference>
<dbReference type="NCBIfam" id="NF008653">
    <property type="entry name" value="PRK11650.1"/>
    <property type="match status" value="1"/>
</dbReference>
<dbReference type="PANTHER" id="PTHR43875">
    <property type="entry name" value="MALTODEXTRIN IMPORT ATP-BINDING PROTEIN MSMX"/>
    <property type="match status" value="1"/>
</dbReference>
<dbReference type="PANTHER" id="PTHR43875:SF12">
    <property type="entry name" value="SN-GLYCEROL-3-PHOSPHATE IMPORT ATP-BINDING PROTEIN UGPC"/>
    <property type="match status" value="1"/>
</dbReference>
<dbReference type="Pfam" id="PF00005">
    <property type="entry name" value="ABC_tran"/>
    <property type="match status" value="1"/>
</dbReference>
<dbReference type="Pfam" id="PF17912">
    <property type="entry name" value="OB_MalK"/>
    <property type="match status" value="1"/>
</dbReference>
<dbReference type="SMART" id="SM00382">
    <property type="entry name" value="AAA"/>
    <property type="match status" value="1"/>
</dbReference>
<dbReference type="SUPFAM" id="SSF50331">
    <property type="entry name" value="MOP-like"/>
    <property type="match status" value="1"/>
</dbReference>
<dbReference type="SUPFAM" id="SSF52540">
    <property type="entry name" value="P-loop containing nucleoside triphosphate hydrolases"/>
    <property type="match status" value="1"/>
</dbReference>
<dbReference type="PROSITE" id="PS00211">
    <property type="entry name" value="ABC_TRANSPORTER_1"/>
    <property type="match status" value="1"/>
</dbReference>
<dbReference type="PROSITE" id="PS50893">
    <property type="entry name" value="ABC_TRANSPORTER_2"/>
    <property type="match status" value="1"/>
</dbReference>
<dbReference type="PROSITE" id="PS51315">
    <property type="entry name" value="UGPC"/>
    <property type="match status" value="1"/>
</dbReference>
<organism>
    <name type="scientific">Escherichia coli O1:K1 / APEC</name>
    <dbReference type="NCBI Taxonomy" id="405955"/>
    <lineage>
        <taxon>Bacteria</taxon>
        <taxon>Pseudomonadati</taxon>
        <taxon>Pseudomonadota</taxon>
        <taxon>Gammaproteobacteria</taxon>
        <taxon>Enterobacterales</taxon>
        <taxon>Enterobacteriaceae</taxon>
        <taxon>Escherichia</taxon>
    </lineage>
</organism>
<protein>
    <recommendedName>
        <fullName evidence="1">sn-glycerol-3-phosphate import ATP-binding protein UgpC</fullName>
        <ecNumber evidence="1">7.6.2.10</ecNumber>
    </recommendedName>
</protein>
<sequence length="356" mass="39502">MAGLKLQAVTKSWDGKTQVIKPLTLDVADGEFIVMVGPSGCGKSTLLRMVAGLERVTTGDIWIDRKRVTEMEPKDRGIAMVFQNYALYPHMSVEENMAWGLKIRGMGKQQIAERVKEAARILELDGLLKRRPRELSGGQRQRVAMGRAIVREPAVFLFDEPLSNLDAKLRVQMRLELQQLHRRLKTTSLYVTHDQVEAMTLAQRVMVMNGGVAEQIGTPVEVYEKPASLFVASFIGSPAMNLLAGRVNNEGTHFELDGGITLPLNGGYRQYAGRKMTLGIRPEHIALSSQAEGGVPLVMDTLEILGADNLAHGRWGEQKLVVRLAHQERPTAGSTLWLHLPENQLHLFDGETGQRV</sequence>
<comment type="function">
    <text evidence="1">Part of the ABC transporter complex UgpBAEC involved in sn-glycerol-3-phosphate (G3P) import. Responsible for energy coupling to the transport system.</text>
</comment>
<comment type="catalytic activity">
    <reaction evidence="1">
        <text>sn-glycerol 3-phosphate(out) + ATP + H2O = sn-glycerol 3-phosphate(in) + ADP + phosphate + H(+)</text>
        <dbReference type="Rhea" id="RHEA:21668"/>
        <dbReference type="ChEBI" id="CHEBI:15377"/>
        <dbReference type="ChEBI" id="CHEBI:15378"/>
        <dbReference type="ChEBI" id="CHEBI:30616"/>
        <dbReference type="ChEBI" id="CHEBI:43474"/>
        <dbReference type="ChEBI" id="CHEBI:57597"/>
        <dbReference type="ChEBI" id="CHEBI:456216"/>
        <dbReference type="EC" id="7.6.2.10"/>
    </reaction>
</comment>
<comment type="subunit">
    <text evidence="1">The complex is composed of two ATP-binding proteins (UgpC), two transmembrane proteins (UgpA and UgpE) and a solute-binding protein (UgpB).</text>
</comment>
<comment type="subcellular location">
    <subcellularLocation>
        <location evidence="1">Cell inner membrane</location>
        <topology evidence="1">Peripheral membrane protein</topology>
    </subcellularLocation>
</comment>
<comment type="similarity">
    <text evidence="1">Belongs to the ABC transporter superfamily. sn-glycerol-3-phosphate importer (TC 3.A.1.1.3) family.</text>
</comment>
<reference key="1">
    <citation type="journal article" date="2007" name="J. Bacteriol.">
        <title>The genome sequence of avian pathogenic Escherichia coli strain O1:K1:H7 shares strong similarities with human extraintestinal pathogenic E. coli genomes.</title>
        <authorList>
            <person name="Johnson T.J."/>
            <person name="Kariyawasam S."/>
            <person name="Wannemuehler Y."/>
            <person name="Mangiamele P."/>
            <person name="Johnson S.J."/>
            <person name="Doetkott C."/>
            <person name="Skyberg J.A."/>
            <person name="Lynne A.M."/>
            <person name="Johnson J.R."/>
            <person name="Nolan L.K."/>
        </authorList>
    </citation>
    <scope>NUCLEOTIDE SEQUENCE [LARGE SCALE GENOMIC DNA]</scope>
</reference>
<accession>A1AGY1</accession>
<gene>
    <name evidence="1" type="primary">ugpC</name>
    <name type="ordered locus">Ecok1_34270</name>
    <name type="ORF">APECO1_3009</name>
</gene>
<evidence type="ECO:0000255" key="1">
    <source>
        <dbReference type="HAMAP-Rule" id="MF_01727"/>
    </source>
</evidence>
<keyword id="KW-0067">ATP-binding</keyword>
<keyword id="KW-0997">Cell inner membrane</keyword>
<keyword id="KW-1003">Cell membrane</keyword>
<keyword id="KW-0472">Membrane</keyword>
<keyword id="KW-0547">Nucleotide-binding</keyword>
<keyword id="KW-1185">Reference proteome</keyword>
<keyword id="KW-0762">Sugar transport</keyword>
<keyword id="KW-1278">Translocase</keyword>
<keyword id="KW-0813">Transport</keyword>